<gene>
    <name evidence="1" type="primary">astE</name>
    <name type="ordered locus">YPA_1348</name>
</gene>
<accession>Q1C8A7</accession>
<comment type="function">
    <text evidence="1">Transforms N(2)-succinylglutamate into succinate and glutamate.</text>
</comment>
<comment type="catalytic activity">
    <reaction evidence="1">
        <text>N-succinyl-L-glutamate + H2O = L-glutamate + succinate</text>
        <dbReference type="Rhea" id="RHEA:15169"/>
        <dbReference type="ChEBI" id="CHEBI:15377"/>
        <dbReference type="ChEBI" id="CHEBI:29985"/>
        <dbReference type="ChEBI" id="CHEBI:30031"/>
        <dbReference type="ChEBI" id="CHEBI:58763"/>
        <dbReference type="EC" id="3.5.1.96"/>
    </reaction>
</comment>
<comment type="cofactor">
    <cofactor evidence="1">
        <name>Zn(2+)</name>
        <dbReference type="ChEBI" id="CHEBI:29105"/>
    </cofactor>
    <text evidence="1">Binds 1 zinc ion per subunit.</text>
</comment>
<comment type="pathway">
    <text evidence="1">Amino-acid degradation; L-arginine degradation via AST pathway; L-glutamate and succinate from L-arginine: step 5/5.</text>
</comment>
<comment type="similarity">
    <text evidence="1">Belongs to the AspA/AstE family. Succinylglutamate desuccinylase subfamily.</text>
</comment>
<dbReference type="EC" id="3.5.1.96" evidence="1"/>
<dbReference type="EMBL" id="CP000308">
    <property type="protein sequence ID" value="ABG13315.1"/>
    <property type="molecule type" value="Genomic_DNA"/>
</dbReference>
<dbReference type="RefSeq" id="WP_002212028.1">
    <property type="nucleotide sequence ID" value="NZ_CP009906.1"/>
</dbReference>
<dbReference type="SMR" id="Q1C8A7"/>
<dbReference type="GeneID" id="49786048"/>
<dbReference type="KEGG" id="ypa:YPA_1348"/>
<dbReference type="UniPathway" id="UPA00185">
    <property type="reaction ID" value="UER00283"/>
</dbReference>
<dbReference type="Proteomes" id="UP000001971">
    <property type="component" value="Chromosome"/>
</dbReference>
<dbReference type="GO" id="GO:0016788">
    <property type="term" value="F:hydrolase activity, acting on ester bonds"/>
    <property type="evidence" value="ECO:0007669"/>
    <property type="project" value="UniProtKB-UniRule"/>
</dbReference>
<dbReference type="GO" id="GO:0009017">
    <property type="term" value="F:succinylglutamate desuccinylase activity"/>
    <property type="evidence" value="ECO:0007669"/>
    <property type="project" value="UniProtKB-EC"/>
</dbReference>
<dbReference type="GO" id="GO:0008270">
    <property type="term" value="F:zinc ion binding"/>
    <property type="evidence" value="ECO:0007669"/>
    <property type="project" value="UniProtKB-UniRule"/>
</dbReference>
<dbReference type="GO" id="GO:0019544">
    <property type="term" value="P:arginine catabolic process to glutamate"/>
    <property type="evidence" value="ECO:0007669"/>
    <property type="project" value="UniProtKB-UniRule"/>
</dbReference>
<dbReference type="GO" id="GO:0019545">
    <property type="term" value="P:arginine catabolic process to succinate"/>
    <property type="evidence" value="ECO:0007669"/>
    <property type="project" value="UniProtKB-UniRule"/>
</dbReference>
<dbReference type="CDD" id="cd03855">
    <property type="entry name" value="M14_ASTE"/>
    <property type="match status" value="1"/>
</dbReference>
<dbReference type="FunFam" id="3.40.630.10:FF:000017">
    <property type="entry name" value="Succinylglutamate desuccinylase"/>
    <property type="match status" value="1"/>
</dbReference>
<dbReference type="Gene3D" id="3.40.630.10">
    <property type="entry name" value="Zn peptidases"/>
    <property type="match status" value="1"/>
</dbReference>
<dbReference type="HAMAP" id="MF_00767">
    <property type="entry name" value="Arg_catab_AstE"/>
    <property type="match status" value="1"/>
</dbReference>
<dbReference type="InterPro" id="IPR050178">
    <property type="entry name" value="AspA/AstE_fam"/>
</dbReference>
<dbReference type="InterPro" id="IPR055438">
    <property type="entry name" value="AstE_AspA_cat"/>
</dbReference>
<dbReference type="InterPro" id="IPR007036">
    <property type="entry name" value="Aste_AspA_hybrid_dom"/>
</dbReference>
<dbReference type="InterPro" id="IPR016681">
    <property type="entry name" value="SuccinylGlu_desuccinylase"/>
</dbReference>
<dbReference type="NCBIfam" id="TIGR03242">
    <property type="entry name" value="arg_catab_astE"/>
    <property type="match status" value="1"/>
</dbReference>
<dbReference type="NCBIfam" id="NF003706">
    <property type="entry name" value="PRK05324.1"/>
    <property type="match status" value="1"/>
</dbReference>
<dbReference type="PANTHER" id="PTHR15162">
    <property type="entry name" value="ASPARTOACYLASE"/>
    <property type="match status" value="1"/>
</dbReference>
<dbReference type="PANTHER" id="PTHR15162:SF7">
    <property type="entry name" value="SUCCINYLGLUTAMATE DESUCCINYLASE"/>
    <property type="match status" value="1"/>
</dbReference>
<dbReference type="Pfam" id="PF24827">
    <property type="entry name" value="AstE_AspA_cat"/>
    <property type="match status" value="1"/>
</dbReference>
<dbReference type="Pfam" id="PF04952">
    <property type="entry name" value="AstE_AspA_hybrid"/>
    <property type="match status" value="1"/>
</dbReference>
<dbReference type="PIRSF" id="PIRSF017020">
    <property type="entry name" value="AstE"/>
    <property type="match status" value="1"/>
</dbReference>
<dbReference type="SUPFAM" id="SSF53187">
    <property type="entry name" value="Zn-dependent exopeptidases"/>
    <property type="match status" value="1"/>
</dbReference>
<keyword id="KW-0056">Arginine metabolism</keyword>
<keyword id="KW-0378">Hydrolase</keyword>
<keyword id="KW-0479">Metal-binding</keyword>
<keyword id="KW-0862">Zinc</keyword>
<reference key="1">
    <citation type="journal article" date="2006" name="J. Bacteriol.">
        <title>Complete genome sequence of Yersinia pestis strains Antiqua and Nepal516: evidence of gene reduction in an emerging pathogen.</title>
        <authorList>
            <person name="Chain P.S.G."/>
            <person name="Hu P."/>
            <person name="Malfatti S.A."/>
            <person name="Radnedge L."/>
            <person name="Larimer F."/>
            <person name="Vergez L.M."/>
            <person name="Worsham P."/>
            <person name="Chu M.C."/>
            <person name="Andersen G.L."/>
        </authorList>
    </citation>
    <scope>NUCLEOTIDE SEQUENCE [LARGE SCALE GENOMIC DNA]</scope>
    <source>
        <strain>Antiqua</strain>
    </source>
</reference>
<name>ASTE_YERPA</name>
<feature type="chain" id="PRO_0000257724" description="Succinylglutamate desuccinylase">
    <location>
        <begin position="1"/>
        <end position="330"/>
    </location>
</feature>
<feature type="active site" evidence="1">
    <location>
        <position position="210"/>
    </location>
</feature>
<feature type="binding site" evidence="1">
    <location>
        <position position="53"/>
    </location>
    <ligand>
        <name>Zn(2+)</name>
        <dbReference type="ChEBI" id="CHEBI:29105"/>
    </ligand>
</feature>
<feature type="binding site" evidence="1">
    <location>
        <position position="56"/>
    </location>
    <ligand>
        <name>Zn(2+)</name>
        <dbReference type="ChEBI" id="CHEBI:29105"/>
    </ligand>
</feature>
<feature type="binding site" evidence="1">
    <location>
        <position position="147"/>
    </location>
    <ligand>
        <name>Zn(2+)</name>
        <dbReference type="ChEBI" id="CHEBI:29105"/>
    </ligand>
</feature>
<organism>
    <name type="scientific">Yersinia pestis bv. Antiqua (strain Antiqua)</name>
    <dbReference type="NCBI Taxonomy" id="360102"/>
    <lineage>
        <taxon>Bacteria</taxon>
        <taxon>Pseudomonadati</taxon>
        <taxon>Pseudomonadota</taxon>
        <taxon>Gammaproteobacteria</taxon>
        <taxon>Enterobacterales</taxon>
        <taxon>Yersiniaceae</taxon>
        <taxon>Yersinia</taxon>
    </lineage>
</organism>
<protein>
    <recommendedName>
        <fullName evidence="1">Succinylglutamate desuccinylase</fullName>
        <ecNumber evidence="1">3.5.1.96</ecNumber>
    </recommendedName>
</protein>
<proteinExistence type="inferred from homology"/>
<evidence type="ECO:0000255" key="1">
    <source>
        <dbReference type="HAMAP-Rule" id="MF_00767"/>
    </source>
</evidence>
<sequence length="330" mass="37268">MLDFLAITLSGKPPQVIQGETVNLKWQWLGEGILTLVPHRSYTQSVVISAGIHGNETAPIEILNQLVTDLLAGQLPLSVRLLVLLGNPPAIRKGKRYLSNDINRMFGGRYQHYTPSDETRRASTLEQRVMAFFQASHTSERLHYDLHTAIRGSYHPRFGLLPYQQTPYSAAMFRWLRDIELDALVMHTSAGGTFAHFSSERCQAASCTLELGKALPFGENQLSQFSAITQGLRSLVSDSALPARKTENMKYYRVVKSLLRQHPDFKLRVAEDTVNFTRFAQGTLLTEQPNDNYRVEHPYEWILFPNPHVALGLRAGMMLVKMCESELPIT</sequence>